<sequence>MSEELTPQQVTRMTKLQKRLRTEVGRAIGDYNMIEEGDRVMCCLSGGKDSYAMLDILLNLQQRAPIKFEIVAVNLDQKQPGFPEDILPAYLDTLGVAYHILEKDTYSIVKDKIPEGKTTCSLCSRLRRGTLYGFAQKIGATKIALGHHRDDIIETMFLNMFFAGKMKAMPPKLLSDDGANMVIRPLAYAREKDIAEYAALKGFPIIPCNLCGSQENLKRAAVKEMLVQWDKQHPGRIETIFTAMQNTAPSQGVDREQFDFLSLQRDPDAPMSGQVAESDLPAFDFVDVSNNGHINLDAAARIDVVSTYTPE</sequence>
<organism>
    <name type="scientific">Shewanella pealeana (strain ATCC 700345 / ANG-SQ1)</name>
    <dbReference type="NCBI Taxonomy" id="398579"/>
    <lineage>
        <taxon>Bacteria</taxon>
        <taxon>Pseudomonadati</taxon>
        <taxon>Pseudomonadota</taxon>
        <taxon>Gammaproteobacteria</taxon>
        <taxon>Alteromonadales</taxon>
        <taxon>Shewanellaceae</taxon>
        <taxon>Shewanella</taxon>
    </lineage>
</organism>
<protein>
    <recommendedName>
        <fullName evidence="1">tRNA-cytidine(32) 2-sulfurtransferase</fullName>
        <ecNumber evidence="1">2.8.1.-</ecNumber>
    </recommendedName>
    <alternativeName>
        <fullName evidence="1">Two-thiocytidine biosynthesis protein A</fullName>
    </alternativeName>
    <alternativeName>
        <fullName evidence="1">tRNA 2-thiocytidine biosynthesis protein TtcA</fullName>
    </alternativeName>
</protein>
<feature type="chain" id="PRO_0000348840" description="tRNA-cytidine(32) 2-sulfurtransferase">
    <location>
        <begin position="1"/>
        <end position="311"/>
    </location>
</feature>
<feature type="short sequence motif" description="PP-loop motif" evidence="1">
    <location>
        <begin position="45"/>
        <end position="50"/>
    </location>
</feature>
<feature type="binding site" evidence="1">
    <location>
        <position position="120"/>
    </location>
    <ligand>
        <name>[4Fe-4S] cluster</name>
        <dbReference type="ChEBI" id="CHEBI:49883"/>
    </ligand>
</feature>
<feature type="binding site" evidence="1">
    <location>
        <position position="123"/>
    </location>
    <ligand>
        <name>[4Fe-4S] cluster</name>
        <dbReference type="ChEBI" id="CHEBI:49883"/>
    </ligand>
</feature>
<feature type="binding site" evidence="1">
    <location>
        <position position="211"/>
    </location>
    <ligand>
        <name>[4Fe-4S] cluster</name>
        <dbReference type="ChEBI" id="CHEBI:49883"/>
    </ligand>
</feature>
<dbReference type="EC" id="2.8.1.-" evidence="1"/>
<dbReference type="EMBL" id="CP000851">
    <property type="protein sequence ID" value="ABV87544.1"/>
    <property type="molecule type" value="Genomic_DNA"/>
</dbReference>
<dbReference type="RefSeq" id="WP_012155460.1">
    <property type="nucleotide sequence ID" value="NC_009901.1"/>
</dbReference>
<dbReference type="SMR" id="A8H4Q7"/>
<dbReference type="STRING" id="398579.Spea_2224"/>
<dbReference type="KEGG" id="spl:Spea_2224"/>
<dbReference type="eggNOG" id="COG0037">
    <property type="taxonomic scope" value="Bacteria"/>
</dbReference>
<dbReference type="HOGENOM" id="CLU_026481_0_0_6"/>
<dbReference type="OrthoDB" id="9801054at2"/>
<dbReference type="Proteomes" id="UP000002608">
    <property type="component" value="Chromosome"/>
</dbReference>
<dbReference type="GO" id="GO:0005737">
    <property type="term" value="C:cytoplasm"/>
    <property type="evidence" value="ECO:0007669"/>
    <property type="project" value="UniProtKB-SubCell"/>
</dbReference>
<dbReference type="GO" id="GO:0051539">
    <property type="term" value="F:4 iron, 4 sulfur cluster binding"/>
    <property type="evidence" value="ECO:0007669"/>
    <property type="project" value="UniProtKB-UniRule"/>
</dbReference>
<dbReference type="GO" id="GO:0005524">
    <property type="term" value="F:ATP binding"/>
    <property type="evidence" value="ECO:0007669"/>
    <property type="project" value="UniProtKB-UniRule"/>
</dbReference>
<dbReference type="GO" id="GO:0000287">
    <property type="term" value="F:magnesium ion binding"/>
    <property type="evidence" value="ECO:0007669"/>
    <property type="project" value="UniProtKB-UniRule"/>
</dbReference>
<dbReference type="GO" id="GO:0016783">
    <property type="term" value="F:sulfurtransferase activity"/>
    <property type="evidence" value="ECO:0007669"/>
    <property type="project" value="UniProtKB-UniRule"/>
</dbReference>
<dbReference type="GO" id="GO:0000049">
    <property type="term" value="F:tRNA binding"/>
    <property type="evidence" value="ECO:0007669"/>
    <property type="project" value="UniProtKB-KW"/>
</dbReference>
<dbReference type="GO" id="GO:0034227">
    <property type="term" value="P:tRNA thio-modification"/>
    <property type="evidence" value="ECO:0007669"/>
    <property type="project" value="UniProtKB-UniRule"/>
</dbReference>
<dbReference type="CDD" id="cd24138">
    <property type="entry name" value="TtcA-like"/>
    <property type="match status" value="1"/>
</dbReference>
<dbReference type="Gene3D" id="3.40.50.620">
    <property type="entry name" value="HUPs"/>
    <property type="match status" value="1"/>
</dbReference>
<dbReference type="HAMAP" id="MF_01850">
    <property type="entry name" value="TtcA"/>
    <property type="match status" value="1"/>
</dbReference>
<dbReference type="InterPro" id="IPR014729">
    <property type="entry name" value="Rossmann-like_a/b/a_fold"/>
</dbReference>
<dbReference type="InterPro" id="IPR011063">
    <property type="entry name" value="TilS/TtcA_N"/>
</dbReference>
<dbReference type="InterPro" id="IPR012089">
    <property type="entry name" value="tRNA_Cyd_32_2_STrfase"/>
</dbReference>
<dbReference type="InterPro" id="IPR035107">
    <property type="entry name" value="tRNA_thiolation_TtcA_Ctu1"/>
</dbReference>
<dbReference type="NCBIfam" id="NF007972">
    <property type="entry name" value="PRK10696.1"/>
    <property type="match status" value="1"/>
</dbReference>
<dbReference type="PANTHER" id="PTHR43686:SF1">
    <property type="entry name" value="AMINOTRAN_5 DOMAIN-CONTAINING PROTEIN"/>
    <property type="match status" value="1"/>
</dbReference>
<dbReference type="PANTHER" id="PTHR43686">
    <property type="entry name" value="SULFURTRANSFERASE-RELATED"/>
    <property type="match status" value="1"/>
</dbReference>
<dbReference type="Pfam" id="PF01171">
    <property type="entry name" value="ATP_bind_3"/>
    <property type="match status" value="1"/>
</dbReference>
<dbReference type="PIRSF" id="PIRSF004976">
    <property type="entry name" value="ATPase_YdaO"/>
    <property type="match status" value="1"/>
</dbReference>
<dbReference type="SUPFAM" id="SSF52402">
    <property type="entry name" value="Adenine nucleotide alpha hydrolases-like"/>
    <property type="match status" value="1"/>
</dbReference>
<accession>A8H4Q7</accession>
<name>TTCA_SHEPA</name>
<reference key="1">
    <citation type="submission" date="2007-10" db="EMBL/GenBank/DDBJ databases">
        <title>Complete sequence of Shewanella pealeana ATCC 700345.</title>
        <authorList>
            <consortium name="US DOE Joint Genome Institute"/>
            <person name="Copeland A."/>
            <person name="Lucas S."/>
            <person name="Lapidus A."/>
            <person name="Barry K."/>
            <person name="Glavina del Rio T."/>
            <person name="Dalin E."/>
            <person name="Tice H."/>
            <person name="Pitluck S."/>
            <person name="Chertkov O."/>
            <person name="Brettin T."/>
            <person name="Bruce D."/>
            <person name="Detter J.C."/>
            <person name="Han C."/>
            <person name="Schmutz J."/>
            <person name="Larimer F."/>
            <person name="Land M."/>
            <person name="Hauser L."/>
            <person name="Kyrpides N."/>
            <person name="Kim E."/>
            <person name="Zhao J.-S.Z."/>
            <person name="Manno D."/>
            <person name="Hawari J."/>
            <person name="Richardson P."/>
        </authorList>
    </citation>
    <scope>NUCLEOTIDE SEQUENCE [LARGE SCALE GENOMIC DNA]</scope>
    <source>
        <strain>ATCC 700345 / ANG-SQ1</strain>
    </source>
</reference>
<gene>
    <name evidence="1" type="primary">ttcA</name>
    <name type="ordered locus">Spea_2224</name>
</gene>
<evidence type="ECO:0000255" key="1">
    <source>
        <dbReference type="HAMAP-Rule" id="MF_01850"/>
    </source>
</evidence>
<keyword id="KW-0004">4Fe-4S</keyword>
<keyword id="KW-0067">ATP-binding</keyword>
<keyword id="KW-0963">Cytoplasm</keyword>
<keyword id="KW-0408">Iron</keyword>
<keyword id="KW-0411">Iron-sulfur</keyword>
<keyword id="KW-0460">Magnesium</keyword>
<keyword id="KW-0479">Metal-binding</keyword>
<keyword id="KW-0547">Nucleotide-binding</keyword>
<keyword id="KW-1185">Reference proteome</keyword>
<keyword id="KW-0694">RNA-binding</keyword>
<keyword id="KW-0808">Transferase</keyword>
<keyword id="KW-0819">tRNA processing</keyword>
<keyword id="KW-0820">tRNA-binding</keyword>
<comment type="function">
    <text evidence="1">Catalyzes the ATP-dependent 2-thiolation of cytidine in position 32 of tRNA, to form 2-thiocytidine (s(2)C32). The sulfur atoms are provided by the cysteine/cysteine desulfurase (IscS) system.</text>
</comment>
<comment type="catalytic activity">
    <reaction evidence="1">
        <text>cytidine(32) in tRNA + S-sulfanyl-L-cysteinyl-[cysteine desulfurase] + AH2 + ATP = 2-thiocytidine(32) in tRNA + L-cysteinyl-[cysteine desulfurase] + A + AMP + diphosphate + H(+)</text>
        <dbReference type="Rhea" id="RHEA:57048"/>
        <dbReference type="Rhea" id="RHEA-COMP:10288"/>
        <dbReference type="Rhea" id="RHEA-COMP:12157"/>
        <dbReference type="Rhea" id="RHEA-COMP:12158"/>
        <dbReference type="Rhea" id="RHEA-COMP:14821"/>
        <dbReference type="ChEBI" id="CHEBI:13193"/>
        <dbReference type="ChEBI" id="CHEBI:15378"/>
        <dbReference type="ChEBI" id="CHEBI:17499"/>
        <dbReference type="ChEBI" id="CHEBI:29950"/>
        <dbReference type="ChEBI" id="CHEBI:30616"/>
        <dbReference type="ChEBI" id="CHEBI:33019"/>
        <dbReference type="ChEBI" id="CHEBI:61963"/>
        <dbReference type="ChEBI" id="CHEBI:82748"/>
        <dbReference type="ChEBI" id="CHEBI:141453"/>
        <dbReference type="ChEBI" id="CHEBI:456215"/>
    </reaction>
    <physiologicalReaction direction="left-to-right" evidence="1">
        <dbReference type="Rhea" id="RHEA:57049"/>
    </physiologicalReaction>
</comment>
<comment type="cofactor">
    <cofactor evidence="1">
        <name>Mg(2+)</name>
        <dbReference type="ChEBI" id="CHEBI:18420"/>
    </cofactor>
</comment>
<comment type="cofactor">
    <cofactor evidence="1">
        <name>[4Fe-4S] cluster</name>
        <dbReference type="ChEBI" id="CHEBI:49883"/>
    </cofactor>
    <text evidence="1">Binds 1 [4Fe-4S] cluster per subunit. The cluster is chelated by three Cys residues, the fourth Fe has a free coordination site that may bind a sulfur atom transferred from the persulfide of IscS.</text>
</comment>
<comment type="pathway">
    <text evidence="1">tRNA modification.</text>
</comment>
<comment type="subunit">
    <text evidence="1">Homodimer.</text>
</comment>
<comment type="subcellular location">
    <subcellularLocation>
        <location evidence="1">Cytoplasm</location>
    </subcellularLocation>
</comment>
<comment type="miscellaneous">
    <text evidence="1">The thiolation reaction likely consists of two steps: a first activation step by ATP to form an adenylated intermediate of the target base of tRNA, and a second nucleophilic substitution step of the sulfur (S) atom supplied by the hydrosulfide attached to the Fe-S cluster.</text>
</comment>
<comment type="similarity">
    <text evidence="1">Belongs to the TtcA family.</text>
</comment>
<proteinExistence type="inferred from homology"/>